<sequence length="555" mass="64104">MASQASQVLASPHPAISSENRPKADFHPGIWGDMFIICPDTDIDAATELQYEELKAQVRKMIMEPVDDSNQKLPFIDAVQRLGVSYHFEKEIEDELENIYRDTNNNDADTDLYTTALRFRLLREHGFDISCDAFNKFKDEAGNFKASLTSDVQGLLELYEASYMRVHGEDILDEAISFTTAQLTLALPTLHHPLSEQVGHALKQSIRRGLPRVEARNFISIYQDLESHNKSLLQFAKIDFNLLQLLHRKELSEICRWWKDLDFTRKLPFARDRVVEGYFWIMGVYFEPQYSLGRKMLTKVIAMASIVDDTYDSYATYDELIPYTNAIERWDIKCMNQLPNYMKISYKALLNVYEEMEQLLANQGRQYRVEYAKKAMIRLVQAYLLEAKWTHQNYKPTFEEFRDNALPTSGYAMLAITAFVGMGEVITPETFKWAASDPKIIKASTIICRFMDDIAEHKFNHRREDDCSAIECYMKQYGVTAQEAYNEFNKHIESSWKDVNEEFLKPTEMPTPVLCRSLNLARVMDVLYREGDGYTHVGKAAKGGITSLLIDPIQI</sequence>
<name>DCS3_GOSAR</name>
<comment type="function">
    <text>Responsible for the cyclization of trans,trans-farnesyl diphosphate (FPP) to (+)-delta cadinene.</text>
</comment>
<comment type="catalytic activity">
    <reaction>
        <text>(2E,6E)-farnesyl diphosphate = (1S,8aR)-delta-cadinene + diphosphate</text>
        <dbReference type="Rhea" id="RHEA:19525"/>
        <dbReference type="ChEBI" id="CHEBI:15385"/>
        <dbReference type="ChEBI" id="CHEBI:33019"/>
        <dbReference type="ChEBI" id="CHEBI:175763"/>
        <dbReference type="EC" id="4.2.3.13"/>
    </reaction>
</comment>
<comment type="cofactor">
    <cofactor evidence="1">
        <name>Mg(2+)</name>
        <dbReference type="ChEBI" id="CHEBI:18420"/>
    </cofactor>
    <text evidence="1">Binds 3 Mg(2+) ions per subunit.</text>
</comment>
<comment type="pathway">
    <text>Secondary metabolite biosynthesis; terpenoid biosynthesis.</text>
</comment>
<comment type="domain">
    <text>The Asp-Asp-Xaa-Xaa-Asp/Glu (DDXXD/E) motif is important for the catalytic activity, presumably through binding to Mg(2+).</text>
</comment>
<comment type="similarity">
    <text evidence="3">Belongs to the terpene synthase family.</text>
</comment>
<dbReference type="EC" id="4.2.3.13"/>
<dbReference type="EMBL" id="X96429">
    <property type="protein sequence ID" value="CAA65289.1"/>
    <property type="molecule type" value="mRNA"/>
</dbReference>
<dbReference type="EMBL" id="U27535">
    <property type="protein sequence ID" value="AAB41259.1"/>
    <property type="molecule type" value="mRNA"/>
</dbReference>
<dbReference type="RefSeq" id="NP_001316949.1">
    <property type="nucleotide sequence ID" value="NM_001330020.1"/>
</dbReference>
<dbReference type="SMR" id="Q43714"/>
<dbReference type="GeneID" id="108463032"/>
<dbReference type="UniPathway" id="UPA00213"/>
<dbReference type="GO" id="GO:0047461">
    <property type="term" value="F:(+)-delta-cadinene synthase activity"/>
    <property type="evidence" value="ECO:0007669"/>
    <property type="project" value="UniProtKB-EC"/>
</dbReference>
<dbReference type="GO" id="GO:0000287">
    <property type="term" value="F:magnesium ion binding"/>
    <property type="evidence" value="ECO:0007669"/>
    <property type="project" value="InterPro"/>
</dbReference>
<dbReference type="GO" id="GO:0048653">
    <property type="term" value="P:anther development"/>
    <property type="evidence" value="ECO:0000270"/>
    <property type="project" value="AgBase"/>
</dbReference>
<dbReference type="GO" id="GO:0048825">
    <property type="term" value="P:cotyledon development"/>
    <property type="evidence" value="ECO:0000270"/>
    <property type="project" value="AgBase"/>
</dbReference>
<dbReference type="GO" id="GO:0016102">
    <property type="term" value="P:diterpenoid biosynthetic process"/>
    <property type="evidence" value="ECO:0007669"/>
    <property type="project" value="InterPro"/>
</dbReference>
<dbReference type="GO" id="GO:0090377">
    <property type="term" value="P:seed trichome initiation"/>
    <property type="evidence" value="ECO:0000304"/>
    <property type="project" value="AgBase"/>
</dbReference>
<dbReference type="GO" id="GO:0048442">
    <property type="term" value="P:sepal development"/>
    <property type="evidence" value="ECO:0000270"/>
    <property type="project" value="AgBase"/>
</dbReference>
<dbReference type="GO" id="GO:0048480">
    <property type="term" value="P:stigma development"/>
    <property type="evidence" value="ECO:0000270"/>
    <property type="project" value="AgBase"/>
</dbReference>
<dbReference type="CDD" id="cd00684">
    <property type="entry name" value="Terpene_cyclase_plant_C1"/>
    <property type="match status" value="1"/>
</dbReference>
<dbReference type="FunFam" id="1.10.600.10:FF:000007">
    <property type="entry name" value="Isoprene synthase, chloroplastic"/>
    <property type="match status" value="1"/>
</dbReference>
<dbReference type="FunFam" id="1.50.10.130:FF:000001">
    <property type="entry name" value="Isoprene synthase, chloroplastic"/>
    <property type="match status" value="1"/>
</dbReference>
<dbReference type="Gene3D" id="1.10.600.10">
    <property type="entry name" value="Farnesyl Diphosphate Synthase"/>
    <property type="match status" value="1"/>
</dbReference>
<dbReference type="Gene3D" id="1.50.10.130">
    <property type="entry name" value="Terpene synthase, N-terminal domain"/>
    <property type="match status" value="1"/>
</dbReference>
<dbReference type="InterPro" id="IPR008949">
    <property type="entry name" value="Isoprenoid_synthase_dom_sf"/>
</dbReference>
<dbReference type="InterPro" id="IPR044814">
    <property type="entry name" value="Terpene_cyclase_plant_C1"/>
</dbReference>
<dbReference type="InterPro" id="IPR001906">
    <property type="entry name" value="Terpene_synth_N"/>
</dbReference>
<dbReference type="InterPro" id="IPR036965">
    <property type="entry name" value="Terpene_synth_N_sf"/>
</dbReference>
<dbReference type="InterPro" id="IPR050148">
    <property type="entry name" value="Terpene_synthase-like"/>
</dbReference>
<dbReference type="InterPro" id="IPR005630">
    <property type="entry name" value="Terpene_synthase_metal-bd"/>
</dbReference>
<dbReference type="InterPro" id="IPR008930">
    <property type="entry name" value="Terpenoid_cyclase/PrenylTrfase"/>
</dbReference>
<dbReference type="PANTHER" id="PTHR31225:SF215">
    <property type="entry name" value="(+)-DELTA-CADINENE SYNTHASE"/>
    <property type="match status" value="1"/>
</dbReference>
<dbReference type="PANTHER" id="PTHR31225">
    <property type="entry name" value="OS04G0344100 PROTEIN-RELATED"/>
    <property type="match status" value="1"/>
</dbReference>
<dbReference type="Pfam" id="PF01397">
    <property type="entry name" value="Terpene_synth"/>
    <property type="match status" value="1"/>
</dbReference>
<dbReference type="Pfam" id="PF03936">
    <property type="entry name" value="Terpene_synth_C"/>
    <property type="match status" value="1"/>
</dbReference>
<dbReference type="SFLD" id="SFLDS00005">
    <property type="entry name" value="Isoprenoid_Synthase_Type_I"/>
    <property type="match status" value="1"/>
</dbReference>
<dbReference type="SFLD" id="SFLDG01604">
    <property type="entry name" value="Terpene_Cyclase_Like_1_C_Termi"/>
    <property type="match status" value="1"/>
</dbReference>
<dbReference type="SUPFAM" id="SSF48239">
    <property type="entry name" value="Terpenoid cyclases/Protein prenyltransferases"/>
    <property type="match status" value="1"/>
</dbReference>
<dbReference type="SUPFAM" id="SSF48576">
    <property type="entry name" value="Terpenoid synthases"/>
    <property type="match status" value="1"/>
</dbReference>
<reference key="1">
    <citation type="journal article" date="1996" name="J. Nat. Prod.">
        <title>Cloning and heterologous expression of a second (+)-delta-cadinene synthase from Gossypium arboreum.</title>
        <authorList>
            <person name="Chen X.-Y."/>
            <person name="Wang M."/>
            <person name="Chen Y."/>
            <person name="Davisson V.J."/>
            <person name="Heinstein P."/>
        </authorList>
    </citation>
    <scope>NUCLEOTIDE SEQUENCE [MRNA]</scope>
    <source>
        <strain>cv. Nanking</strain>
    </source>
</reference>
<gene>
    <name type="primary">CAD1-A</name>
</gene>
<evidence type="ECO:0000250" key="1"/>
<evidence type="ECO:0000256" key="2">
    <source>
        <dbReference type="SAM" id="MobiDB-lite"/>
    </source>
</evidence>
<evidence type="ECO:0000305" key="3"/>
<organism>
    <name type="scientific">Gossypium arboreum</name>
    <name type="common">Tree cotton</name>
    <name type="synonym">Gossypium nanking</name>
    <dbReference type="NCBI Taxonomy" id="29729"/>
    <lineage>
        <taxon>Eukaryota</taxon>
        <taxon>Viridiplantae</taxon>
        <taxon>Streptophyta</taxon>
        <taxon>Embryophyta</taxon>
        <taxon>Tracheophyta</taxon>
        <taxon>Spermatophyta</taxon>
        <taxon>Magnoliopsida</taxon>
        <taxon>eudicotyledons</taxon>
        <taxon>Gunneridae</taxon>
        <taxon>Pentapetalae</taxon>
        <taxon>rosids</taxon>
        <taxon>malvids</taxon>
        <taxon>Malvales</taxon>
        <taxon>Malvaceae</taxon>
        <taxon>Malvoideae</taxon>
        <taxon>Gossypium</taxon>
    </lineage>
</organism>
<feature type="chain" id="PRO_0000186441" description="(+)-delta-cadinene synthase isozyme A">
    <location>
        <begin position="1"/>
        <end position="555"/>
    </location>
</feature>
<feature type="region of interest" description="Disordered" evidence="2">
    <location>
        <begin position="1"/>
        <end position="22"/>
    </location>
</feature>
<feature type="short sequence motif" description="DDXXD motif">
    <location>
        <begin position="308"/>
        <end position="312"/>
    </location>
</feature>
<feature type="binding site" evidence="1">
    <location>
        <position position="308"/>
    </location>
    <ligand>
        <name>Mg(2+)</name>
        <dbReference type="ChEBI" id="CHEBI:18420"/>
        <label>1</label>
    </ligand>
</feature>
<feature type="binding site" evidence="1">
    <location>
        <position position="308"/>
    </location>
    <ligand>
        <name>Mg(2+)</name>
        <dbReference type="ChEBI" id="CHEBI:18420"/>
        <label>2</label>
    </ligand>
</feature>
<feature type="binding site" evidence="1">
    <location>
        <position position="312"/>
    </location>
    <ligand>
        <name>Mg(2+)</name>
        <dbReference type="ChEBI" id="CHEBI:18420"/>
        <label>1</label>
    </ligand>
</feature>
<feature type="binding site" evidence="1">
    <location>
        <position position="312"/>
    </location>
    <ligand>
        <name>Mg(2+)</name>
        <dbReference type="ChEBI" id="CHEBI:18420"/>
        <label>2</label>
    </ligand>
</feature>
<feature type="binding site" evidence="1">
    <location>
        <position position="452"/>
    </location>
    <ligand>
        <name>Mg(2+)</name>
        <dbReference type="ChEBI" id="CHEBI:18420"/>
        <label>3</label>
    </ligand>
</feature>
<feature type="binding site" evidence="1">
    <location>
        <position position="456"/>
    </location>
    <ligand>
        <name>Mg(2+)</name>
        <dbReference type="ChEBI" id="CHEBI:18420"/>
        <label>3</label>
    </ligand>
</feature>
<accession>Q43714</accession>
<protein>
    <recommendedName>
        <fullName>(+)-delta-cadinene synthase isozyme A</fullName>
        <shortName>D-cadinene synthase A</shortName>
        <ecNumber>4.2.3.13</ecNumber>
    </recommendedName>
</protein>
<keyword id="KW-0456">Lyase</keyword>
<keyword id="KW-0460">Magnesium</keyword>
<keyword id="KW-0479">Metal-binding</keyword>
<proteinExistence type="evidence at transcript level"/>